<proteinExistence type="evidence at protein level"/>
<comment type="subunit">
    <text>A and B can form homopolymers.</text>
</comment>
<comment type="subcellular location">
    <subcellularLocation>
        <location>Cytoplasm</location>
    </subcellularLocation>
</comment>
<comment type="tissue specificity">
    <text>Giant body muscle cells.</text>
</comment>
<comment type="similarity">
    <text evidence="2">Belongs to the intermediate filament family.</text>
</comment>
<name>IFEA_ASCSU</name>
<dbReference type="SMR" id="P23730"/>
<dbReference type="GO" id="GO:0005737">
    <property type="term" value="C:cytoplasm"/>
    <property type="evidence" value="ECO:0007669"/>
    <property type="project" value="UniProtKB-SubCell"/>
</dbReference>
<dbReference type="GO" id="GO:0005882">
    <property type="term" value="C:intermediate filament"/>
    <property type="evidence" value="ECO:0000314"/>
    <property type="project" value="CACAO"/>
</dbReference>
<dbReference type="GO" id="GO:0005635">
    <property type="term" value="C:nuclear envelope"/>
    <property type="evidence" value="ECO:0007669"/>
    <property type="project" value="TreeGrafter"/>
</dbReference>
<dbReference type="GO" id="GO:0005652">
    <property type="term" value="C:nuclear lamina"/>
    <property type="evidence" value="ECO:0007669"/>
    <property type="project" value="TreeGrafter"/>
</dbReference>
<dbReference type="GO" id="GO:0005200">
    <property type="term" value="F:structural constituent of cytoskeleton"/>
    <property type="evidence" value="ECO:0007669"/>
    <property type="project" value="TreeGrafter"/>
</dbReference>
<dbReference type="GO" id="GO:0031507">
    <property type="term" value="P:heterochromatin formation"/>
    <property type="evidence" value="ECO:0007669"/>
    <property type="project" value="TreeGrafter"/>
</dbReference>
<dbReference type="GO" id="GO:0006998">
    <property type="term" value="P:nuclear envelope organization"/>
    <property type="evidence" value="ECO:0007669"/>
    <property type="project" value="TreeGrafter"/>
</dbReference>
<dbReference type="GO" id="GO:0007097">
    <property type="term" value="P:nuclear migration"/>
    <property type="evidence" value="ECO:0007669"/>
    <property type="project" value="TreeGrafter"/>
</dbReference>
<dbReference type="GO" id="GO:0051664">
    <property type="term" value="P:nuclear pore localization"/>
    <property type="evidence" value="ECO:0007669"/>
    <property type="project" value="TreeGrafter"/>
</dbReference>
<dbReference type="GO" id="GO:0090435">
    <property type="term" value="P:protein localization to nuclear envelope"/>
    <property type="evidence" value="ECO:0007669"/>
    <property type="project" value="TreeGrafter"/>
</dbReference>
<dbReference type="FunFam" id="1.20.5.1160:FF:000016">
    <property type="entry name" value="Intermediate filament protein A"/>
    <property type="match status" value="1"/>
</dbReference>
<dbReference type="FunFam" id="2.60.40.1260:FF:000003">
    <property type="entry name" value="Intermediate filament protein A"/>
    <property type="match status" value="1"/>
</dbReference>
<dbReference type="FunFam" id="1.20.5.170:FF:000058">
    <property type="entry name" value="Intermediate filament protein B"/>
    <property type="match status" value="1"/>
</dbReference>
<dbReference type="FunFam" id="1.20.5.1160:FF:000023">
    <property type="entry name" value="Intermediate filament protein ifa-1"/>
    <property type="match status" value="1"/>
</dbReference>
<dbReference type="Gene3D" id="1.20.5.170">
    <property type="match status" value="1"/>
</dbReference>
<dbReference type="Gene3D" id="2.60.40.1260">
    <property type="entry name" value="Lamin Tail domain"/>
    <property type="match status" value="1"/>
</dbReference>
<dbReference type="Gene3D" id="1.20.5.500">
    <property type="entry name" value="Single helix bin"/>
    <property type="match status" value="1"/>
</dbReference>
<dbReference type="Gene3D" id="1.20.5.1160">
    <property type="entry name" value="Vasodilator-stimulated phosphoprotein"/>
    <property type="match status" value="2"/>
</dbReference>
<dbReference type="InterPro" id="IPR018039">
    <property type="entry name" value="IF_conserved"/>
</dbReference>
<dbReference type="InterPro" id="IPR039008">
    <property type="entry name" value="IF_rod_dom"/>
</dbReference>
<dbReference type="InterPro" id="IPR016451">
    <property type="entry name" value="Intermed_filament_ifa/ifb"/>
</dbReference>
<dbReference type="InterPro" id="IPR001322">
    <property type="entry name" value="Lamin_tail_dom"/>
</dbReference>
<dbReference type="InterPro" id="IPR036415">
    <property type="entry name" value="Lamin_tail_dom_sf"/>
</dbReference>
<dbReference type="PANTHER" id="PTHR45721:SF12">
    <property type="entry name" value="INTERMEDIATE FILAMENT PROTEIN IFA-1"/>
    <property type="match status" value="1"/>
</dbReference>
<dbReference type="PANTHER" id="PTHR45721">
    <property type="entry name" value="LAMIN DM0-RELATED"/>
    <property type="match status" value="1"/>
</dbReference>
<dbReference type="Pfam" id="PF00038">
    <property type="entry name" value="Filament"/>
    <property type="match status" value="1"/>
</dbReference>
<dbReference type="Pfam" id="PF00932">
    <property type="entry name" value="LTD"/>
    <property type="match status" value="1"/>
</dbReference>
<dbReference type="PIRSF" id="PIRSF005546">
    <property type="entry name" value="Intermed_filamnt_Ifb-2"/>
    <property type="match status" value="1"/>
</dbReference>
<dbReference type="SMART" id="SM01391">
    <property type="entry name" value="Filament"/>
    <property type="match status" value="1"/>
</dbReference>
<dbReference type="SUPFAM" id="SSF64593">
    <property type="entry name" value="Intermediate filament protein, coiled coil region"/>
    <property type="match status" value="2"/>
</dbReference>
<dbReference type="SUPFAM" id="SSF74853">
    <property type="entry name" value="Lamin A/C globular tail domain"/>
    <property type="match status" value="1"/>
</dbReference>
<dbReference type="SUPFAM" id="SSF58104">
    <property type="entry name" value="Methyl-accepting chemotaxis protein (MCP) signaling domain"/>
    <property type="match status" value="1"/>
</dbReference>
<dbReference type="PROSITE" id="PS00226">
    <property type="entry name" value="IF_ROD_1"/>
    <property type="match status" value="1"/>
</dbReference>
<dbReference type="PROSITE" id="PS51842">
    <property type="entry name" value="IF_ROD_2"/>
    <property type="match status" value="1"/>
</dbReference>
<dbReference type="PROSITE" id="PS51841">
    <property type="entry name" value="LTD"/>
    <property type="match status" value="1"/>
</dbReference>
<evidence type="ECO:0000255" key="1">
    <source>
        <dbReference type="PROSITE-ProRule" id="PRU01187"/>
    </source>
</evidence>
<evidence type="ECO:0000255" key="2">
    <source>
        <dbReference type="PROSITE-ProRule" id="PRU01188"/>
    </source>
</evidence>
<keyword id="KW-0175">Coiled coil</keyword>
<keyword id="KW-0963">Cytoplasm</keyword>
<keyword id="KW-0903">Direct protein sequencing</keyword>
<keyword id="KW-0403">Intermediate filament</keyword>
<reference key="1">
    <citation type="journal article" date="1989" name="EMBO J.">
        <title>Cytoplasmic intermediate filament proteins of invertebrates are closer to nuclear lamins than are vertebrate intermediate filament proteins; sequence characterization of two muscle proteins of a nematode.</title>
        <authorList>
            <person name="Weber K."/>
            <person name="Plessmann U."/>
            <person name="Ulrich W."/>
        </authorList>
    </citation>
    <scope>PROTEIN SEQUENCE</scope>
</reference>
<feature type="chain" id="PRO_0000063832" description="Intermediate filament protein A">
    <location>
        <begin position="1" status="less than"/>
        <end position="497"/>
    </location>
</feature>
<feature type="domain" description="IF rod" evidence="2">
    <location>
        <begin position="1" status="less than"/>
        <end position="342"/>
    </location>
</feature>
<feature type="domain" description="LTD" evidence="1">
    <location>
        <begin position="375"/>
        <end position="493"/>
    </location>
</feature>
<feature type="region of interest" description="Coil 1A">
    <location>
        <begin position="1"/>
        <end position="32"/>
    </location>
</feature>
<feature type="region of interest" description="Linker 1">
    <location>
        <begin position="33"/>
        <end position="46"/>
    </location>
</feature>
<feature type="region of interest" description="Coil 1B">
    <location>
        <begin position="47"/>
        <end position="184"/>
    </location>
</feature>
<feature type="region of interest" description="Linker 12">
    <location>
        <begin position="185"/>
        <end position="202"/>
    </location>
</feature>
<feature type="region of interest" description="Coil 2">
    <location>
        <begin position="203"/>
        <end position="342"/>
    </location>
</feature>
<feature type="region of interest" description="Tail">
    <location>
        <begin position="343"/>
        <end position="497"/>
    </location>
</feature>
<feature type="non-terminal residue">
    <location>
        <position position="1"/>
    </location>
</feature>
<accession>P23730</accession>
<protein>
    <recommendedName>
        <fullName>Intermediate filament protein A</fullName>
        <shortName>IF-A</shortName>
    </recommendedName>
</protein>
<sequence>MSDLNDRLASYIEKVRFLEAQNRKLAADLDLLRGRWGKDTLSVRAMYEGELQEARKLVNDTNRQREELEKEIRKLLDELSEYRRKYEDALRGHQIDRDRIDELLNQLSGLEAEINLLRRRIANIIEEIARIKKENLQFANELTKARSDLDQETLNRIDFQNQVQTLLEEIDFMRRVHDQEIAELQAMASRDTTPENREYFKNELASAIRDIRAEYDQICNVNRMDMESWYKLKVQEIQTQSTRQNLEQNYAKKRLRVQLTDLRGKLADLEGRNSLLKQTQELNYQLEDDQRSYEAALNDRDAQIRKMDEECQALMMLLDTKQTLDAEIAIYRKMLEGEENRAGLRQLVEQVVKTHGLTQVDETESLRVLKGETASRTSFQRSAKGNVSIQETAPDGRYVVLENTHRSKEEAIGEWKLKRKIDGKREIVYTLPRDFILRPGKSVKIWARGQGGIHSPPEQLVFDLEDTFGSGSNVQTILFNREGEERATHIQRSSHTI</sequence>
<organism>
    <name type="scientific">Ascaris suum</name>
    <name type="common">Pig roundworm</name>
    <name type="synonym">Ascaris lumbricoides</name>
    <dbReference type="NCBI Taxonomy" id="6253"/>
    <lineage>
        <taxon>Eukaryota</taxon>
        <taxon>Metazoa</taxon>
        <taxon>Ecdysozoa</taxon>
        <taxon>Nematoda</taxon>
        <taxon>Chromadorea</taxon>
        <taxon>Rhabditida</taxon>
        <taxon>Spirurina</taxon>
        <taxon>Ascaridomorpha</taxon>
        <taxon>Ascaridoidea</taxon>
        <taxon>Ascarididae</taxon>
        <taxon>Ascaris</taxon>
    </lineage>
</organism>